<accession>Q5E465</accession>
<feature type="chain" id="PRO_1000003864" description="Nucleoid-associated protein VF_1686">
    <location>
        <begin position="1"/>
        <end position="111"/>
    </location>
</feature>
<feature type="region of interest" description="Disordered" evidence="2">
    <location>
        <begin position="1"/>
        <end position="23"/>
    </location>
</feature>
<feature type="region of interest" description="Disordered" evidence="2">
    <location>
        <begin position="89"/>
        <end position="111"/>
    </location>
</feature>
<protein>
    <recommendedName>
        <fullName evidence="1">Nucleoid-associated protein VF_1686</fullName>
    </recommendedName>
</protein>
<dbReference type="EMBL" id="CP000020">
    <property type="protein sequence ID" value="AAW86181.1"/>
    <property type="molecule type" value="Genomic_DNA"/>
</dbReference>
<dbReference type="RefSeq" id="WP_005420010.1">
    <property type="nucleotide sequence ID" value="NZ_CAWLES010000001.1"/>
</dbReference>
<dbReference type="RefSeq" id="YP_205069.1">
    <property type="nucleotide sequence ID" value="NC_006840.2"/>
</dbReference>
<dbReference type="SMR" id="Q5E465"/>
<dbReference type="STRING" id="312309.VF_1686"/>
<dbReference type="EnsemblBacteria" id="AAW86181">
    <property type="protein sequence ID" value="AAW86181"/>
    <property type="gene ID" value="VF_1686"/>
</dbReference>
<dbReference type="GeneID" id="54164380"/>
<dbReference type="KEGG" id="vfi:VF_1686"/>
<dbReference type="PATRIC" id="fig|312309.11.peg.1707"/>
<dbReference type="eggNOG" id="COG0718">
    <property type="taxonomic scope" value="Bacteria"/>
</dbReference>
<dbReference type="HOGENOM" id="CLU_140930_0_0_6"/>
<dbReference type="OrthoDB" id="9808738at2"/>
<dbReference type="Proteomes" id="UP000000537">
    <property type="component" value="Chromosome I"/>
</dbReference>
<dbReference type="GO" id="GO:0043590">
    <property type="term" value="C:bacterial nucleoid"/>
    <property type="evidence" value="ECO:0007669"/>
    <property type="project" value="UniProtKB-UniRule"/>
</dbReference>
<dbReference type="GO" id="GO:0005829">
    <property type="term" value="C:cytosol"/>
    <property type="evidence" value="ECO:0007669"/>
    <property type="project" value="TreeGrafter"/>
</dbReference>
<dbReference type="GO" id="GO:0003677">
    <property type="term" value="F:DNA binding"/>
    <property type="evidence" value="ECO:0007669"/>
    <property type="project" value="UniProtKB-UniRule"/>
</dbReference>
<dbReference type="FunFam" id="3.30.1310.10:FF:000001">
    <property type="entry name" value="Nucleoid-associated protein YbaB"/>
    <property type="match status" value="1"/>
</dbReference>
<dbReference type="Gene3D" id="3.30.1310.10">
    <property type="entry name" value="Nucleoid-associated protein YbaB-like domain"/>
    <property type="match status" value="1"/>
</dbReference>
<dbReference type="HAMAP" id="MF_00274">
    <property type="entry name" value="DNA_YbaB_EbfC"/>
    <property type="match status" value="1"/>
</dbReference>
<dbReference type="InterPro" id="IPR036894">
    <property type="entry name" value="YbaB-like_sf"/>
</dbReference>
<dbReference type="InterPro" id="IPR004401">
    <property type="entry name" value="YbaB/EbfC"/>
</dbReference>
<dbReference type="NCBIfam" id="TIGR00103">
    <property type="entry name" value="DNA_YbaB_EbfC"/>
    <property type="match status" value="1"/>
</dbReference>
<dbReference type="PANTHER" id="PTHR33449">
    <property type="entry name" value="NUCLEOID-ASSOCIATED PROTEIN YBAB"/>
    <property type="match status" value="1"/>
</dbReference>
<dbReference type="PANTHER" id="PTHR33449:SF1">
    <property type="entry name" value="NUCLEOID-ASSOCIATED PROTEIN YBAB"/>
    <property type="match status" value="1"/>
</dbReference>
<dbReference type="Pfam" id="PF02575">
    <property type="entry name" value="YbaB_DNA_bd"/>
    <property type="match status" value="1"/>
</dbReference>
<dbReference type="PIRSF" id="PIRSF004555">
    <property type="entry name" value="UCP004555"/>
    <property type="match status" value="1"/>
</dbReference>
<dbReference type="SUPFAM" id="SSF82607">
    <property type="entry name" value="YbaB-like"/>
    <property type="match status" value="1"/>
</dbReference>
<reference key="1">
    <citation type="journal article" date="2005" name="Proc. Natl. Acad. Sci. U.S.A.">
        <title>Complete genome sequence of Vibrio fischeri: a symbiotic bacterium with pathogenic congeners.</title>
        <authorList>
            <person name="Ruby E.G."/>
            <person name="Urbanowski M."/>
            <person name="Campbell J."/>
            <person name="Dunn A."/>
            <person name="Faini M."/>
            <person name="Gunsalus R."/>
            <person name="Lostroh P."/>
            <person name="Lupp C."/>
            <person name="McCann J."/>
            <person name="Millikan D."/>
            <person name="Schaefer A."/>
            <person name="Stabb E."/>
            <person name="Stevens A."/>
            <person name="Visick K."/>
            <person name="Whistler C."/>
            <person name="Greenberg E.P."/>
        </authorList>
    </citation>
    <scope>NUCLEOTIDE SEQUENCE [LARGE SCALE GENOMIC DNA]</scope>
    <source>
        <strain>ATCC 700601 / ES114</strain>
    </source>
</reference>
<sequence length="111" mass="12273">MFGGKGGMGNLMKQAQQMQDRMQKMQEEIANMEVTGESGAGLVKVTITGSHSVRRVEIDPSLMEEDEKEMLEDLIAAAFNDASRRIEETQKEKMASVTGGMQMPPGFKMPF</sequence>
<evidence type="ECO:0000255" key="1">
    <source>
        <dbReference type="HAMAP-Rule" id="MF_00274"/>
    </source>
</evidence>
<evidence type="ECO:0000256" key="2">
    <source>
        <dbReference type="SAM" id="MobiDB-lite"/>
    </source>
</evidence>
<name>Y1686_ALIF1</name>
<gene>
    <name type="ordered locus">VF_1686</name>
</gene>
<organism>
    <name type="scientific">Aliivibrio fischeri (strain ATCC 700601 / ES114)</name>
    <name type="common">Vibrio fischeri</name>
    <dbReference type="NCBI Taxonomy" id="312309"/>
    <lineage>
        <taxon>Bacteria</taxon>
        <taxon>Pseudomonadati</taxon>
        <taxon>Pseudomonadota</taxon>
        <taxon>Gammaproteobacteria</taxon>
        <taxon>Vibrionales</taxon>
        <taxon>Vibrionaceae</taxon>
        <taxon>Aliivibrio</taxon>
    </lineage>
</organism>
<comment type="function">
    <text evidence="1">Binds to DNA and alters its conformation. May be involved in regulation of gene expression, nucleoid organization and DNA protection.</text>
</comment>
<comment type="subunit">
    <text evidence="1">Homodimer.</text>
</comment>
<comment type="subcellular location">
    <subcellularLocation>
        <location evidence="1">Cytoplasm</location>
        <location evidence="1">Nucleoid</location>
    </subcellularLocation>
</comment>
<comment type="similarity">
    <text evidence="1">Belongs to the YbaB/EbfC family.</text>
</comment>
<proteinExistence type="inferred from homology"/>
<keyword id="KW-0963">Cytoplasm</keyword>
<keyword id="KW-0238">DNA-binding</keyword>
<keyword id="KW-1185">Reference proteome</keyword>